<dbReference type="EC" id="2.8.1.6" evidence="1"/>
<dbReference type="EMBL" id="AM286415">
    <property type="protein sequence ID" value="CAL12945.1"/>
    <property type="molecule type" value="Genomic_DNA"/>
</dbReference>
<dbReference type="RefSeq" id="WP_011816797.1">
    <property type="nucleotide sequence ID" value="NC_008800.1"/>
</dbReference>
<dbReference type="RefSeq" id="YP_001007095.1">
    <property type="nucleotide sequence ID" value="NC_008800.1"/>
</dbReference>
<dbReference type="SMR" id="A1JS69"/>
<dbReference type="KEGG" id="yen:YE2907"/>
<dbReference type="PATRIC" id="fig|393305.7.peg.3091"/>
<dbReference type="eggNOG" id="COG0502">
    <property type="taxonomic scope" value="Bacteria"/>
</dbReference>
<dbReference type="HOGENOM" id="CLU_033172_1_2_6"/>
<dbReference type="OrthoDB" id="9786826at2"/>
<dbReference type="UniPathway" id="UPA00078">
    <property type="reaction ID" value="UER00162"/>
</dbReference>
<dbReference type="Proteomes" id="UP000000642">
    <property type="component" value="Chromosome"/>
</dbReference>
<dbReference type="GO" id="GO:0051537">
    <property type="term" value="F:2 iron, 2 sulfur cluster binding"/>
    <property type="evidence" value="ECO:0007669"/>
    <property type="project" value="UniProtKB-KW"/>
</dbReference>
<dbReference type="GO" id="GO:0051539">
    <property type="term" value="F:4 iron, 4 sulfur cluster binding"/>
    <property type="evidence" value="ECO:0007669"/>
    <property type="project" value="UniProtKB-KW"/>
</dbReference>
<dbReference type="GO" id="GO:0004076">
    <property type="term" value="F:biotin synthase activity"/>
    <property type="evidence" value="ECO:0007669"/>
    <property type="project" value="UniProtKB-UniRule"/>
</dbReference>
<dbReference type="GO" id="GO:0005506">
    <property type="term" value="F:iron ion binding"/>
    <property type="evidence" value="ECO:0007669"/>
    <property type="project" value="UniProtKB-UniRule"/>
</dbReference>
<dbReference type="GO" id="GO:0009102">
    <property type="term" value="P:biotin biosynthetic process"/>
    <property type="evidence" value="ECO:0007669"/>
    <property type="project" value="UniProtKB-UniRule"/>
</dbReference>
<dbReference type="CDD" id="cd01335">
    <property type="entry name" value="Radical_SAM"/>
    <property type="match status" value="1"/>
</dbReference>
<dbReference type="FunFam" id="3.20.20.70:FF:000011">
    <property type="entry name" value="Biotin synthase"/>
    <property type="match status" value="1"/>
</dbReference>
<dbReference type="Gene3D" id="3.20.20.70">
    <property type="entry name" value="Aldolase class I"/>
    <property type="match status" value="1"/>
</dbReference>
<dbReference type="HAMAP" id="MF_01694">
    <property type="entry name" value="BioB"/>
    <property type="match status" value="1"/>
</dbReference>
<dbReference type="InterPro" id="IPR013785">
    <property type="entry name" value="Aldolase_TIM"/>
</dbReference>
<dbReference type="InterPro" id="IPR010722">
    <property type="entry name" value="BATS_dom"/>
</dbReference>
<dbReference type="InterPro" id="IPR002684">
    <property type="entry name" value="Biotin_synth/BioAB"/>
</dbReference>
<dbReference type="InterPro" id="IPR024177">
    <property type="entry name" value="Biotin_synthase"/>
</dbReference>
<dbReference type="InterPro" id="IPR006638">
    <property type="entry name" value="Elp3/MiaA/NifB-like_rSAM"/>
</dbReference>
<dbReference type="InterPro" id="IPR007197">
    <property type="entry name" value="rSAM"/>
</dbReference>
<dbReference type="NCBIfam" id="TIGR00433">
    <property type="entry name" value="bioB"/>
    <property type="match status" value="1"/>
</dbReference>
<dbReference type="PANTHER" id="PTHR22976">
    <property type="entry name" value="BIOTIN SYNTHASE"/>
    <property type="match status" value="1"/>
</dbReference>
<dbReference type="PANTHER" id="PTHR22976:SF2">
    <property type="entry name" value="BIOTIN SYNTHASE, MITOCHONDRIAL"/>
    <property type="match status" value="1"/>
</dbReference>
<dbReference type="Pfam" id="PF06968">
    <property type="entry name" value="BATS"/>
    <property type="match status" value="1"/>
</dbReference>
<dbReference type="Pfam" id="PF04055">
    <property type="entry name" value="Radical_SAM"/>
    <property type="match status" value="1"/>
</dbReference>
<dbReference type="PIRSF" id="PIRSF001619">
    <property type="entry name" value="Biotin_synth"/>
    <property type="match status" value="1"/>
</dbReference>
<dbReference type="SFLD" id="SFLDF00272">
    <property type="entry name" value="biotin_synthase"/>
    <property type="match status" value="1"/>
</dbReference>
<dbReference type="SFLD" id="SFLDS00029">
    <property type="entry name" value="Radical_SAM"/>
    <property type="match status" value="1"/>
</dbReference>
<dbReference type="SMART" id="SM00876">
    <property type="entry name" value="BATS"/>
    <property type="match status" value="1"/>
</dbReference>
<dbReference type="SMART" id="SM00729">
    <property type="entry name" value="Elp3"/>
    <property type="match status" value="1"/>
</dbReference>
<dbReference type="SUPFAM" id="SSF102114">
    <property type="entry name" value="Radical SAM enzymes"/>
    <property type="match status" value="1"/>
</dbReference>
<dbReference type="PROSITE" id="PS51918">
    <property type="entry name" value="RADICAL_SAM"/>
    <property type="match status" value="1"/>
</dbReference>
<proteinExistence type="inferred from homology"/>
<organism>
    <name type="scientific">Yersinia enterocolitica serotype O:8 / biotype 1B (strain NCTC 13174 / 8081)</name>
    <dbReference type="NCBI Taxonomy" id="393305"/>
    <lineage>
        <taxon>Bacteria</taxon>
        <taxon>Pseudomonadati</taxon>
        <taxon>Pseudomonadota</taxon>
        <taxon>Gammaproteobacteria</taxon>
        <taxon>Enterobacterales</taxon>
        <taxon>Yersiniaceae</taxon>
        <taxon>Yersinia</taxon>
    </lineage>
</organism>
<protein>
    <recommendedName>
        <fullName evidence="1">Biotin synthase</fullName>
        <ecNumber evidence="1">2.8.1.6</ecNumber>
    </recommendedName>
</protein>
<comment type="function">
    <text evidence="1">Catalyzes the conversion of dethiobiotin (DTB) to biotin by the insertion of a sulfur atom into dethiobiotin via a radical-based mechanism.</text>
</comment>
<comment type="catalytic activity">
    <reaction evidence="1">
        <text>(4R,5S)-dethiobiotin + (sulfur carrier)-SH + 2 reduced [2Fe-2S]-[ferredoxin] + 2 S-adenosyl-L-methionine = (sulfur carrier)-H + biotin + 2 5'-deoxyadenosine + 2 L-methionine + 2 oxidized [2Fe-2S]-[ferredoxin]</text>
        <dbReference type="Rhea" id="RHEA:22060"/>
        <dbReference type="Rhea" id="RHEA-COMP:10000"/>
        <dbReference type="Rhea" id="RHEA-COMP:10001"/>
        <dbReference type="Rhea" id="RHEA-COMP:14737"/>
        <dbReference type="Rhea" id="RHEA-COMP:14739"/>
        <dbReference type="ChEBI" id="CHEBI:17319"/>
        <dbReference type="ChEBI" id="CHEBI:29917"/>
        <dbReference type="ChEBI" id="CHEBI:33737"/>
        <dbReference type="ChEBI" id="CHEBI:33738"/>
        <dbReference type="ChEBI" id="CHEBI:57586"/>
        <dbReference type="ChEBI" id="CHEBI:57844"/>
        <dbReference type="ChEBI" id="CHEBI:59789"/>
        <dbReference type="ChEBI" id="CHEBI:64428"/>
        <dbReference type="ChEBI" id="CHEBI:149473"/>
        <dbReference type="EC" id="2.8.1.6"/>
    </reaction>
</comment>
<comment type="cofactor">
    <cofactor evidence="1">
        <name>[4Fe-4S] cluster</name>
        <dbReference type="ChEBI" id="CHEBI:49883"/>
    </cofactor>
    <text evidence="1">Binds 1 [4Fe-4S] cluster. The cluster is coordinated with 3 cysteines and an exchangeable S-adenosyl-L-methionine.</text>
</comment>
<comment type="cofactor">
    <cofactor evidence="1">
        <name>[2Fe-2S] cluster</name>
        <dbReference type="ChEBI" id="CHEBI:190135"/>
    </cofactor>
    <text evidence="1">Binds 1 [2Fe-2S] cluster. The cluster is coordinated with 3 cysteines and 1 arginine.</text>
</comment>
<comment type="pathway">
    <text evidence="1">Cofactor biosynthesis; biotin biosynthesis; biotin from 7,8-diaminononanoate: step 2/2.</text>
</comment>
<comment type="subunit">
    <text evidence="1">Homodimer.</text>
</comment>
<comment type="similarity">
    <text evidence="1">Belongs to the radical SAM superfamily. Biotin synthase family.</text>
</comment>
<keyword id="KW-0001">2Fe-2S</keyword>
<keyword id="KW-0004">4Fe-4S</keyword>
<keyword id="KW-0093">Biotin biosynthesis</keyword>
<keyword id="KW-0408">Iron</keyword>
<keyword id="KW-0411">Iron-sulfur</keyword>
<keyword id="KW-0479">Metal-binding</keyword>
<keyword id="KW-0949">S-adenosyl-L-methionine</keyword>
<keyword id="KW-0808">Transferase</keyword>
<name>BIOB_YERE8</name>
<reference key="1">
    <citation type="journal article" date="2006" name="PLoS Genet.">
        <title>The complete genome sequence and comparative genome analysis of the high pathogenicity Yersinia enterocolitica strain 8081.</title>
        <authorList>
            <person name="Thomson N.R."/>
            <person name="Howard S."/>
            <person name="Wren B.W."/>
            <person name="Holden M.T.G."/>
            <person name="Crossman L."/>
            <person name="Challis G.L."/>
            <person name="Churcher C."/>
            <person name="Mungall K."/>
            <person name="Brooks K."/>
            <person name="Chillingworth T."/>
            <person name="Feltwell T."/>
            <person name="Abdellah Z."/>
            <person name="Hauser H."/>
            <person name="Jagels K."/>
            <person name="Maddison M."/>
            <person name="Moule S."/>
            <person name="Sanders M."/>
            <person name="Whitehead S."/>
            <person name="Quail M.A."/>
            <person name="Dougan G."/>
            <person name="Parkhill J."/>
            <person name="Prentice M.B."/>
        </authorList>
    </citation>
    <scope>NUCLEOTIDE SEQUENCE [LARGE SCALE GENOMIC DNA]</scope>
    <source>
        <strain>NCTC 13174 / 8081</strain>
    </source>
</reference>
<sequence>MANYLRWTVGQAQALFEKPLLDLLFEAQQIHRQHFDPRQVQVSTLLSIKTGACPEDCKYCPQSSRYKTGLESERLMQVEQVLESAKKAKAAGSTRFCMGAAWKNPHERDMPYLEKMVEGVKAMGMETCMTLGTLDKQQAHRLADAGLDYYNHNLDTSPEFYGSIITTRSYQERLDTLSEVRDAGIKVCSGGIVGLGETVRDRAGLLVQLANLPKPPESVPINMLVKVKGTPLENNDDVDAFEFIRTIAVARIMMPTSYVRLSAGREQMNEQTQAMCFMAGANSIFYGCKLLTTPNPEEDKDLQLFRKLGLNPQQTATQHGDRAQQQVLTEQLLHSDSLPEDSVQFYNAAH</sequence>
<gene>
    <name evidence="1" type="primary">bioB</name>
    <name type="ordered locus">YE2907</name>
</gene>
<accession>A1JS69</accession>
<evidence type="ECO:0000255" key="1">
    <source>
        <dbReference type="HAMAP-Rule" id="MF_01694"/>
    </source>
</evidence>
<evidence type="ECO:0000255" key="2">
    <source>
        <dbReference type="PROSITE-ProRule" id="PRU01266"/>
    </source>
</evidence>
<feature type="chain" id="PRO_0000381719" description="Biotin synthase">
    <location>
        <begin position="1"/>
        <end position="350"/>
    </location>
</feature>
<feature type="domain" description="Radical SAM core" evidence="2">
    <location>
        <begin position="38"/>
        <end position="262"/>
    </location>
</feature>
<feature type="binding site" evidence="1">
    <location>
        <position position="53"/>
    </location>
    <ligand>
        <name>[4Fe-4S] cluster</name>
        <dbReference type="ChEBI" id="CHEBI:49883"/>
        <note>4Fe-4S-S-AdoMet</note>
    </ligand>
</feature>
<feature type="binding site" evidence="1">
    <location>
        <position position="57"/>
    </location>
    <ligand>
        <name>[4Fe-4S] cluster</name>
        <dbReference type="ChEBI" id="CHEBI:49883"/>
        <note>4Fe-4S-S-AdoMet</note>
    </ligand>
</feature>
<feature type="binding site" evidence="1">
    <location>
        <position position="60"/>
    </location>
    <ligand>
        <name>[4Fe-4S] cluster</name>
        <dbReference type="ChEBI" id="CHEBI:49883"/>
        <note>4Fe-4S-S-AdoMet</note>
    </ligand>
</feature>
<feature type="binding site" evidence="1">
    <location>
        <position position="97"/>
    </location>
    <ligand>
        <name>[2Fe-2S] cluster</name>
        <dbReference type="ChEBI" id="CHEBI:190135"/>
    </ligand>
</feature>
<feature type="binding site" evidence="1">
    <location>
        <position position="128"/>
    </location>
    <ligand>
        <name>[2Fe-2S] cluster</name>
        <dbReference type="ChEBI" id="CHEBI:190135"/>
    </ligand>
</feature>
<feature type="binding site" evidence="1">
    <location>
        <position position="188"/>
    </location>
    <ligand>
        <name>[2Fe-2S] cluster</name>
        <dbReference type="ChEBI" id="CHEBI:190135"/>
    </ligand>
</feature>
<feature type="binding site" evidence="1">
    <location>
        <position position="260"/>
    </location>
    <ligand>
        <name>[2Fe-2S] cluster</name>
        <dbReference type="ChEBI" id="CHEBI:190135"/>
    </ligand>
</feature>